<feature type="chain" id="PRO_0000386783" description="Ribosomal RNA small subunit methyltransferase H">
    <location>
        <begin position="1"/>
        <end position="307"/>
    </location>
</feature>
<feature type="binding site" evidence="1">
    <location>
        <begin position="32"/>
        <end position="34"/>
    </location>
    <ligand>
        <name>S-adenosyl-L-methionine</name>
        <dbReference type="ChEBI" id="CHEBI:59789"/>
    </ligand>
</feature>
<feature type="binding site" evidence="1">
    <location>
        <position position="52"/>
    </location>
    <ligand>
        <name>S-adenosyl-L-methionine</name>
        <dbReference type="ChEBI" id="CHEBI:59789"/>
    </ligand>
</feature>
<feature type="binding site" evidence="1">
    <location>
        <position position="78"/>
    </location>
    <ligand>
        <name>S-adenosyl-L-methionine</name>
        <dbReference type="ChEBI" id="CHEBI:59789"/>
    </ligand>
</feature>
<feature type="binding site" evidence="1">
    <location>
        <position position="99"/>
    </location>
    <ligand>
        <name>S-adenosyl-L-methionine</name>
        <dbReference type="ChEBI" id="CHEBI:59789"/>
    </ligand>
</feature>
<feature type="binding site" evidence="1">
    <location>
        <position position="106"/>
    </location>
    <ligand>
        <name>S-adenosyl-L-methionine</name>
        <dbReference type="ChEBI" id="CHEBI:59789"/>
    </ligand>
</feature>
<protein>
    <recommendedName>
        <fullName evidence="1">Ribosomal RNA small subunit methyltransferase H</fullName>
        <ecNumber evidence="1">2.1.1.199</ecNumber>
    </recommendedName>
    <alternativeName>
        <fullName evidence="1">16S rRNA m(4)C1402 methyltransferase</fullName>
    </alternativeName>
    <alternativeName>
        <fullName evidence="1">rRNA (cytosine-N(4)-)-methyltransferase RsmH</fullName>
    </alternativeName>
</protein>
<organism>
    <name type="scientific">Caldicellulosiruptor saccharolyticus (strain ATCC 43494 / DSM 8903 / Tp8T 6331)</name>
    <dbReference type="NCBI Taxonomy" id="351627"/>
    <lineage>
        <taxon>Bacteria</taxon>
        <taxon>Bacillati</taxon>
        <taxon>Bacillota</taxon>
        <taxon>Bacillota incertae sedis</taxon>
        <taxon>Caldicellulosiruptorales</taxon>
        <taxon>Caldicellulosiruptoraceae</taxon>
        <taxon>Caldicellulosiruptor</taxon>
    </lineage>
</organism>
<reference key="1">
    <citation type="submission" date="2007-04" db="EMBL/GenBank/DDBJ databases">
        <title>Genome sequence of the thermophilic hydrogen-producing bacterium Caldicellulosiruptor saccharolyticus DSM 8903.</title>
        <authorList>
            <person name="Copeland A."/>
            <person name="Lucas S."/>
            <person name="Lapidus A."/>
            <person name="Barry K."/>
            <person name="Detter J.C."/>
            <person name="Glavina del Rio T."/>
            <person name="Hammon N."/>
            <person name="Israni S."/>
            <person name="Dalin E."/>
            <person name="Tice H."/>
            <person name="Pitluck S."/>
            <person name="Kiss H."/>
            <person name="Brettin T."/>
            <person name="Bruce D."/>
            <person name="Han C."/>
            <person name="Schmutz J."/>
            <person name="Larimer F."/>
            <person name="Land M."/>
            <person name="Hauser L."/>
            <person name="Kyrpides N."/>
            <person name="Lykidis A."/>
            <person name="van de Werken H.J.G."/>
            <person name="Verhaart M.R.A."/>
            <person name="VanFossen A.L."/>
            <person name="Lewis D.L."/>
            <person name="Nichols J.D."/>
            <person name="Goorissen H.P."/>
            <person name="van Niel E.W.J."/>
            <person name="Stams F.J.M."/>
            <person name="Willquist K.U."/>
            <person name="Ward D.E."/>
            <person name="van der Oost J."/>
            <person name="Kelly R.M."/>
            <person name="Kengen S.M.W."/>
            <person name="Richardson P."/>
        </authorList>
    </citation>
    <scope>NUCLEOTIDE SEQUENCE [LARGE SCALE GENOMIC DNA]</scope>
    <source>
        <strain>ATCC 43494 / DSM 8903 / Tp8T 6331</strain>
    </source>
</reference>
<proteinExistence type="inferred from homology"/>
<evidence type="ECO:0000255" key="1">
    <source>
        <dbReference type="HAMAP-Rule" id="MF_01007"/>
    </source>
</evidence>
<name>RSMH_CALS8</name>
<keyword id="KW-0963">Cytoplasm</keyword>
<keyword id="KW-0489">Methyltransferase</keyword>
<keyword id="KW-0698">rRNA processing</keyword>
<keyword id="KW-0949">S-adenosyl-L-methionine</keyword>
<keyword id="KW-0808">Transferase</keyword>
<sequence>MYEHIPVLLEESTSYLVTKPDGIYVDATFGLGGHSKKILEKLSSNGFLVAIDKDEEAIELGKEKFKKCNNIKIVHSPFSRLDEVLNFLKIDKIDGILFDLGVSSLQLDKPERGFSYNSDSFLDMRMDKTSKLTAYDVVNKYSEKELERIIREYGEERYAKKIAKEIVKRREQKPITTTKELNDLINSVVPRPKDGSNPAKRTFQAIRIEVNGELEEIKVALEKSIRFLKSGGRICVISFHSLEDRIVKEFFKYHSLECICPKDIPVCVCGKKKELNILTKKPITPTKEEIERNKRSHSAKLRVAEKI</sequence>
<accession>A4XHZ6</accession>
<gene>
    <name evidence="1" type="primary">rsmH</name>
    <name type="synonym">mraW</name>
    <name type="ordered locus">Csac_0917</name>
</gene>
<dbReference type="EC" id="2.1.1.199" evidence="1"/>
<dbReference type="EMBL" id="CP000679">
    <property type="protein sequence ID" value="ABP66531.1"/>
    <property type="molecule type" value="Genomic_DNA"/>
</dbReference>
<dbReference type="RefSeq" id="WP_011916477.1">
    <property type="nucleotide sequence ID" value="NC_009437.1"/>
</dbReference>
<dbReference type="SMR" id="A4XHZ6"/>
<dbReference type="STRING" id="351627.Csac_0917"/>
<dbReference type="KEGG" id="csc:Csac_0917"/>
<dbReference type="eggNOG" id="COG0275">
    <property type="taxonomic scope" value="Bacteria"/>
</dbReference>
<dbReference type="HOGENOM" id="CLU_038422_2_0_9"/>
<dbReference type="OrthoDB" id="9806637at2"/>
<dbReference type="Proteomes" id="UP000000256">
    <property type="component" value="Chromosome"/>
</dbReference>
<dbReference type="GO" id="GO:0005737">
    <property type="term" value="C:cytoplasm"/>
    <property type="evidence" value="ECO:0007669"/>
    <property type="project" value="UniProtKB-SubCell"/>
</dbReference>
<dbReference type="GO" id="GO:0071424">
    <property type="term" value="F:rRNA (cytosine-N4-)-methyltransferase activity"/>
    <property type="evidence" value="ECO:0007669"/>
    <property type="project" value="UniProtKB-UniRule"/>
</dbReference>
<dbReference type="GO" id="GO:0070475">
    <property type="term" value="P:rRNA base methylation"/>
    <property type="evidence" value="ECO:0007669"/>
    <property type="project" value="UniProtKB-UniRule"/>
</dbReference>
<dbReference type="FunFam" id="1.10.150.170:FF:000001">
    <property type="entry name" value="Ribosomal RNA small subunit methyltransferase H"/>
    <property type="match status" value="1"/>
</dbReference>
<dbReference type="Gene3D" id="1.10.150.170">
    <property type="entry name" value="Putative methyltransferase TM0872, insert domain"/>
    <property type="match status" value="1"/>
</dbReference>
<dbReference type="Gene3D" id="3.40.50.150">
    <property type="entry name" value="Vaccinia Virus protein VP39"/>
    <property type="match status" value="1"/>
</dbReference>
<dbReference type="HAMAP" id="MF_01007">
    <property type="entry name" value="16SrRNA_methyltr_H"/>
    <property type="match status" value="1"/>
</dbReference>
<dbReference type="InterPro" id="IPR002903">
    <property type="entry name" value="RsmH"/>
</dbReference>
<dbReference type="InterPro" id="IPR023397">
    <property type="entry name" value="SAM-dep_MeTrfase_MraW_recog"/>
</dbReference>
<dbReference type="InterPro" id="IPR029063">
    <property type="entry name" value="SAM-dependent_MTases_sf"/>
</dbReference>
<dbReference type="NCBIfam" id="TIGR00006">
    <property type="entry name" value="16S rRNA (cytosine(1402)-N(4))-methyltransferase RsmH"/>
    <property type="match status" value="1"/>
</dbReference>
<dbReference type="PANTHER" id="PTHR11265:SF0">
    <property type="entry name" value="12S RRNA N4-METHYLCYTIDINE METHYLTRANSFERASE"/>
    <property type="match status" value="1"/>
</dbReference>
<dbReference type="PANTHER" id="PTHR11265">
    <property type="entry name" value="S-ADENOSYL-METHYLTRANSFERASE MRAW"/>
    <property type="match status" value="1"/>
</dbReference>
<dbReference type="Pfam" id="PF01795">
    <property type="entry name" value="Methyltransf_5"/>
    <property type="match status" value="1"/>
</dbReference>
<dbReference type="PIRSF" id="PIRSF004486">
    <property type="entry name" value="MraW"/>
    <property type="match status" value="1"/>
</dbReference>
<dbReference type="SUPFAM" id="SSF81799">
    <property type="entry name" value="Putative methyltransferase TM0872, insert domain"/>
    <property type="match status" value="1"/>
</dbReference>
<dbReference type="SUPFAM" id="SSF53335">
    <property type="entry name" value="S-adenosyl-L-methionine-dependent methyltransferases"/>
    <property type="match status" value="1"/>
</dbReference>
<comment type="function">
    <text evidence="1">Specifically methylates the N4 position of cytidine in position 1402 (C1402) of 16S rRNA.</text>
</comment>
<comment type="catalytic activity">
    <reaction evidence="1">
        <text>cytidine(1402) in 16S rRNA + S-adenosyl-L-methionine = N(4)-methylcytidine(1402) in 16S rRNA + S-adenosyl-L-homocysteine + H(+)</text>
        <dbReference type="Rhea" id="RHEA:42928"/>
        <dbReference type="Rhea" id="RHEA-COMP:10286"/>
        <dbReference type="Rhea" id="RHEA-COMP:10287"/>
        <dbReference type="ChEBI" id="CHEBI:15378"/>
        <dbReference type="ChEBI" id="CHEBI:57856"/>
        <dbReference type="ChEBI" id="CHEBI:59789"/>
        <dbReference type="ChEBI" id="CHEBI:74506"/>
        <dbReference type="ChEBI" id="CHEBI:82748"/>
        <dbReference type="EC" id="2.1.1.199"/>
    </reaction>
</comment>
<comment type="subcellular location">
    <subcellularLocation>
        <location evidence="1">Cytoplasm</location>
    </subcellularLocation>
</comment>
<comment type="similarity">
    <text evidence="1">Belongs to the methyltransferase superfamily. RsmH family.</text>
</comment>